<gene>
    <name type="primary">UBP2</name>
    <name type="ordered locus">YOR124C</name>
    <name type="ORF">O3281</name>
    <name type="ORF">YOR3281C</name>
</gene>
<sequence length="1272" mass="146355">MPNEDNELQKAIENHHNQLLNQDKENADRNGSVIEDLPLYGTSINQQSTPGDVDDGKHLLYPDIATNLPLKTSDRLLDDILCDTIFLNSTDPKVMQKGLQSRGILKESMLSYSTFRSSIRPNCLGSLTDQVVFQTKSEYDSISCPKYNKIHVFQAVIFNPSLAEQQISTFDDIVKIPIYHLKVSVKVRQELERLKKHVGVTQFHSLDHLHEYDRVDLSTFDSSDPNLLDYGIYVSDDTNKLILIEIFKPEFNSPEEHESFTADAIKKRYNAMCVKNESLDKSETPSQVDCFYTLFKIFKGPLTRKSKAEPTKTIDSGNLALNTHLNPEWLTSKYGFQASSEIDEETNEIFTEYVPPDMVDYVNDLETRKIRESFVRKCLQLIFWGQLSTSLLAPNSPLKNTKSVKGMSSLQTSFSTLPWFHLLGESRARILLNSNEQTHSPLDAEPHFINLSVSHYYTDRDIIRNYESLSSLDPENIGLYFDALTYIANRKGAYQLIAYCGKQDIIGQEALENALLMFKINPKECNISELNEATLLSIYKYETSNKSQVTSNHLTNLKNALRLLAKYTKSDKLKFYVDHEPYRALSQAYDTLSIDESVDEDIIKTAYSVKINDSPGLKLDCDRALYTIAISKRSLDLFNFLTEECPQFSNYYGPEKLDYQEALKLLQVNENASDETILKIFKQKWFDENVYEPDQFLILRAALTKISIERNSTLITNFLLTGTIDPNSLPPENWPTGINNIGNTCYLNSLLQYYFSIAPLRRYVLEYQKTVENFNDHLSNSGHIRRIGGREISRGEVERSIQFIYQLRNLFYAMVHTRERCVTPSKELAYLAFAPSNVEVEFEVEGNKVVDQTGVLSDSKKETTDDAFTTKIKDTSLIDLEMEDGLNGDVGTDANRKKNESNDAEVSENEDTTGLTSPTRVAKISSDQLENALEMGRQQDVTECIGNVLFQIESGSEPIRYDEDNEQYDLVKQLFYGTTKQSIVPLSATNKVRTKVERFLSLLINIGDHPKDIYDAFDSYFKDEYLTMEEYGDVIRTVAVTTFPTILQVQIQRVYYDRERLMPFKSIEPLPFKEVIYMDRYADTENPLLLAKKKETEEMKQKLKVMKNRQRELLSRDDSGLTRKDAFLESIKLLESDTIKKTPLKIEAANDVIKTLRNNVQNIDNELMKLYNDINSLEEKISHQFDDFKEYGYSLFSVFIHRGEASYGHYWIYIKDRNRNGIWRKYNDETISEVQEEEVFNFNEGNTATPYFLVYVKQGQEGDIEPLKRILK</sequence>
<organism>
    <name type="scientific">Saccharomyces cerevisiae (strain ATCC 204508 / S288c)</name>
    <name type="common">Baker's yeast</name>
    <dbReference type="NCBI Taxonomy" id="559292"/>
    <lineage>
        <taxon>Eukaryota</taxon>
        <taxon>Fungi</taxon>
        <taxon>Dikarya</taxon>
        <taxon>Ascomycota</taxon>
        <taxon>Saccharomycotina</taxon>
        <taxon>Saccharomycetes</taxon>
        <taxon>Saccharomycetales</taxon>
        <taxon>Saccharomycetaceae</taxon>
        <taxon>Saccharomyces</taxon>
    </lineage>
</organism>
<keyword id="KW-0378">Hydrolase</keyword>
<keyword id="KW-0597">Phosphoprotein</keyword>
<keyword id="KW-0645">Protease</keyword>
<keyword id="KW-1185">Reference proteome</keyword>
<keyword id="KW-0788">Thiol protease</keyword>
<keyword id="KW-0833">Ubl conjugation pathway</keyword>
<evidence type="ECO:0000255" key="1">
    <source>
        <dbReference type="PROSITE-ProRule" id="PRU10092"/>
    </source>
</evidence>
<evidence type="ECO:0000255" key="2">
    <source>
        <dbReference type="PROSITE-ProRule" id="PRU10093"/>
    </source>
</evidence>
<evidence type="ECO:0000256" key="3">
    <source>
        <dbReference type="SAM" id="MobiDB-lite"/>
    </source>
</evidence>
<evidence type="ECO:0000269" key="4">
    <source>
    </source>
</evidence>
<evidence type="ECO:0000269" key="5">
    <source>
    </source>
</evidence>
<evidence type="ECO:0000269" key="6">
    <source>
    </source>
</evidence>
<evidence type="ECO:0000269" key="7">
    <source>
    </source>
</evidence>
<evidence type="ECO:0000305" key="8"/>
<evidence type="ECO:0007744" key="9">
    <source>
    </source>
</evidence>
<evidence type="ECO:0007744" key="10">
    <source>
    </source>
</evidence>
<evidence type="ECO:0007744" key="11">
    <source>
    </source>
</evidence>
<comment type="function">
    <text evidence="5 6 7">Has an ATP-independent isopeptidase activity, cleaving at the C-terminus of the ubiquitin moiety in natural or engineered linear fusion proteins, irrespective of their size or the presence of an N-terminal extension to ubiquitin (PubMed:15933713). Hydrolyzes polyubiquitinated 'Lys-63' polyubiquitin chains in RPO21, producing mono-ubiquitinated RNA polymerase II (PubMed:19920177). Removes ubiquitin chains that initiate proteolysis of FZO1 and inhibit mitochondrial fusion (PubMed:23317502).</text>
</comment>
<comment type="catalytic activity">
    <reaction evidence="6">
        <text>Thiol-dependent hydrolysis of ester, thioester, amide, peptide and isopeptide bonds formed by the C-terminal Gly of ubiquitin (a 76-residue protein attached to proteins as an intracellular targeting signal).</text>
        <dbReference type="EC" id="3.4.19.12"/>
    </reaction>
</comment>
<comment type="subunit">
    <text evidence="5 6 7">Forms a ternary complex with RSP5 and RUP1 (PubMed:15933713). Interacts with RSP5 (PubMed:19920177). Interacts with FZO1 (PubMed:23317502).</text>
</comment>
<comment type="interaction">
    <interactant intactId="EBI-19826">
        <id>Q01476</id>
    </interactant>
    <interactant intactId="EBI-38794">
        <id>Q12242</id>
        <label>RUP1</label>
    </interactant>
    <organismsDiffer>false</organismsDiffer>
    <experiments>4</experiments>
</comment>
<comment type="disruption phenotype">
    <text evidence="6">Increases the amount of polyubiquitinated RNA polymerase II subunit RPO21.</text>
</comment>
<comment type="miscellaneous">
    <text evidence="4">Present with 2420 molecules/cell in log phase SD medium.</text>
</comment>
<comment type="similarity">
    <text evidence="8">Belongs to the peptidase C19 family.</text>
</comment>
<reference key="1">
    <citation type="journal article" date="1992" name="J. Biol. Chem.">
        <title>Ubiquitin-specific proteases of Saccharomyces cerevisiae. Cloning of UBP2 and UBP3, and functional analysis of the UBP gene family.</title>
        <authorList>
            <person name="Baker R.T."/>
            <person name="Tobias J.W."/>
            <person name="Varshavsky A."/>
        </authorList>
    </citation>
    <scope>NUCLEOTIDE SEQUENCE [GENOMIC DNA]</scope>
</reference>
<reference key="2">
    <citation type="journal article" date="1996" name="Yeast">
        <title>Sequencing and analysis of 51 kb on the right arm of chromosome XV from Saccharomyces cerevisiae reveals 30 open reading frames.</title>
        <authorList>
            <person name="Wiemann S."/>
            <person name="Rechmann S."/>
            <person name="Benes V."/>
            <person name="Voss H."/>
            <person name="Schwager C."/>
            <person name="Vlcek C."/>
            <person name="Stegemann J."/>
            <person name="Zimmermann J."/>
            <person name="Erfle H."/>
            <person name="Paces V."/>
            <person name="Ansorge W."/>
        </authorList>
    </citation>
    <scope>NUCLEOTIDE SEQUENCE [GENOMIC DNA]</scope>
    <source>
        <strain>ATCC 96604 / S288c / FY1679</strain>
    </source>
</reference>
<reference key="3">
    <citation type="journal article" date="1997" name="Yeast">
        <title>DNA sequencing and analysis of 130 kb from yeast chromosome XV.</title>
        <authorList>
            <person name="Voss H."/>
            <person name="Benes V."/>
            <person name="Andrade M.A."/>
            <person name="Valencia A."/>
            <person name="Rechmann S."/>
            <person name="Teodoru C."/>
            <person name="Schwager C."/>
            <person name="Paces V."/>
            <person name="Sander C."/>
            <person name="Ansorge W."/>
        </authorList>
    </citation>
    <scope>NUCLEOTIDE SEQUENCE [GENOMIC DNA]</scope>
</reference>
<reference key="4">
    <citation type="journal article" date="1997" name="Nature">
        <title>The nucleotide sequence of Saccharomyces cerevisiae chromosome XV.</title>
        <authorList>
            <person name="Dujon B."/>
            <person name="Albermann K."/>
            <person name="Aldea M."/>
            <person name="Alexandraki D."/>
            <person name="Ansorge W."/>
            <person name="Arino J."/>
            <person name="Benes V."/>
            <person name="Bohn C."/>
            <person name="Bolotin-Fukuhara M."/>
            <person name="Bordonne R."/>
            <person name="Boyer J."/>
            <person name="Camasses A."/>
            <person name="Casamayor A."/>
            <person name="Casas C."/>
            <person name="Cheret G."/>
            <person name="Cziepluch C."/>
            <person name="Daignan-Fornier B."/>
            <person name="Dang V.-D."/>
            <person name="de Haan M."/>
            <person name="Delius H."/>
            <person name="Durand P."/>
            <person name="Fairhead C."/>
            <person name="Feldmann H."/>
            <person name="Gaillon L."/>
            <person name="Galisson F."/>
            <person name="Gamo F.-J."/>
            <person name="Gancedo C."/>
            <person name="Goffeau A."/>
            <person name="Goulding S.E."/>
            <person name="Grivell L.A."/>
            <person name="Habbig B."/>
            <person name="Hand N.J."/>
            <person name="Hani J."/>
            <person name="Hattenhorst U."/>
            <person name="Hebling U."/>
            <person name="Hernando Y."/>
            <person name="Herrero E."/>
            <person name="Heumann K."/>
            <person name="Hiesel R."/>
            <person name="Hilger F."/>
            <person name="Hofmann B."/>
            <person name="Hollenberg C.P."/>
            <person name="Hughes B."/>
            <person name="Jauniaux J.-C."/>
            <person name="Kalogeropoulos A."/>
            <person name="Katsoulou C."/>
            <person name="Kordes E."/>
            <person name="Lafuente M.J."/>
            <person name="Landt O."/>
            <person name="Louis E.J."/>
            <person name="Maarse A.C."/>
            <person name="Madania A."/>
            <person name="Mannhaupt G."/>
            <person name="Marck C."/>
            <person name="Martin R.P."/>
            <person name="Mewes H.-W."/>
            <person name="Michaux G."/>
            <person name="Paces V."/>
            <person name="Parle-McDermott A.G."/>
            <person name="Pearson B.M."/>
            <person name="Perrin A."/>
            <person name="Pettersson B."/>
            <person name="Poch O."/>
            <person name="Pohl T.M."/>
            <person name="Poirey R."/>
            <person name="Portetelle D."/>
            <person name="Pujol A."/>
            <person name="Purnelle B."/>
            <person name="Ramezani Rad M."/>
            <person name="Rechmann S."/>
            <person name="Schwager C."/>
            <person name="Schweizer M."/>
            <person name="Sor F."/>
            <person name="Sterky F."/>
            <person name="Tarassov I.A."/>
            <person name="Teodoru C."/>
            <person name="Tettelin H."/>
            <person name="Thierry A."/>
            <person name="Tobiasch E."/>
            <person name="Tzermia M."/>
            <person name="Uhlen M."/>
            <person name="Unseld M."/>
            <person name="Valens M."/>
            <person name="Vandenbol M."/>
            <person name="Vetter I."/>
            <person name="Vlcek C."/>
            <person name="Voet M."/>
            <person name="Volckaert G."/>
            <person name="Voss H."/>
            <person name="Wambutt R."/>
            <person name="Wedler H."/>
            <person name="Wiemann S."/>
            <person name="Winsor B."/>
            <person name="Wolfe K.H."/>
            <person name="Zollner A."/>
            <person name="Zumstein E."/>
            <person name="Kleine K."/>
        </authorList>
    </citation>
    <scope>NUCLEOTIDE SEQUENCE [LARGE SCALE GENOMIC DNA]</scope>
    <source>
        <strain>ATCC 204508 / S288c</strain>
    </source>
</reference>
<reference key="5">
    <citation type="journal article" date="2014" name="G3 (Bethesda)">
        <title>The reference genome sequence of Saccharomyces cerevisiae: Then and now.</title>
        <authorList>
            <person name="Engel S.R."/>
            <person name="Dietrich F.S."/>
            <person name="Fisk D.G."/>
            <person name="Binkley G."/>
            <person name="Balakrishnan R."/>
            <person name="Costanzo M.C."/>
            <person name="Dwight S.S."/>
            <person name="Hitz B.C."/>
            <person name="Karra K."/>
            <person name="Nash R.S."/>
            <person name="Weng S."/>
            <person name="Wong E.D."/>
            <person name="Lloyd P."/>
            <person name="Skrzypek M.S."/>
            <person name="Miyasato S.R."/>
            <person name="Simison M."/>
            <person name="Cherry J.M."/>
        </authorList>
    </citation>
    <scope>GENOME REANNOTATION</scope>
    <source>
        <strain>ATCC 204508 / S288c</strain>
    </source>
</reference>
<reference key="6">
    <citation type="journal article" date="2003" name="Nature">
        <title>Global analysis of protein expression in yeast.</title>
        <authorList>
            <person name="Ghaemmaghami S."/>
            <person name="Huh W.-K."/>
            <person name="Bower K."/>
            <person name="Howson R.W."/>
            <person name="Belle A."/>
            <person name="Dephoure N."/>
            <person name="O'Shea E.K."/>
            <person name="Weissman J.S."/>
        </authorList>
    </citation>
    <scope>LEVEL OF PROTEIN EXPRESSION [LARGE SCALE ANALYSIS]</scope>
</reference>
<reference key="7">
    <citation type="journal article" date="2005" name="EMBO J.">
        <title>The Rsp5 ubiquitin ligase is coupled to and antagonized by the Ubp2 deubiquitinating enzyme.</title>
        <authorList>
            <person name="Kee Y."/>
            <person name="Lyon N."/>
            <person name="Huibregtse J.M."/>
        </authorList>
    </citation>
    <scope>FUNCTION</scope>
    <scope>INTERACTION WITH RSP5 AND RUP1</scope>
</reference>
<reference key="8">
    <citation type="journal article" date="2007" name="J. Proteome Res.">
        <title>Large-scale phosphorylation analysis of alpha-factor-arrested Saccharomyces cerevisiae.</title>
        <authorList>
            <person name="Li X."/>
            <person name="Gerber S.A."/>
            <person name="Rudner A.D."/>
            <person name="Beausoleil S.A."/>
            <person name="Haas W."/>
            <person name="Villen J."/>
            <person name="Elias J.E."/>
            <person name="Gygi S.P."/>
        </authorList>
    </citation>
    <scope>PHOSPHORYLATION [LARGE SCALE ANALYSIS] AT SER-907</scope>
    <scope>IDENTIFICATION BY MASS SPECTROMETRY [LARGE SCALE ANALYSIS]</scope>
    <source>
        <strain>ADR376</strain>
    </source>
</reference>
<reference key="9">
    <citation type="journal article" date="2008" name="Mol. Cell. Proteomics">
        <title>A multidimensional chromatography technology for in-depth phosphoproteome analysis.</title>
        <authorList>
            <person name="Albuquerque C.P."/>
            <person name="Smolka M.B."/>
            <person name="Payne S.H."/>
            <person name="Bafna V."/>
            <person name="Eng J."/>
            <person name="Zhou H."/>
        </authorList>
    </citation>
    <scope>PHOSPHORYLATION [LARGE SCALE ANALYSIS] AT SER-907</scope>
    <scope>IDENTIFICATION BY MASS SPECTROMETRY [LARGE SCALE ANALYSIS]</scope>
</reference>
<reference key="10">
    <citation type="journal article" date="2009" name="Proc. Natl. Acad. Sci. U.S.A.">
        <title>Distinct ubiquitin ligases act sequentially for RNA polymerase II polyubiquitylation.</title>
        <authorList>
            <person name="Harreman M."/>
            <person name="Taschner M."/>
            <person name="Sigurdsson S."/>
            <person name="Anindya R."/>
            <person name="Reid J."/>
            <person name="Somesh B."/>
            <person name="Kong S.E."/>
            <person name="Banks C.A."/>
            <person name="Conaway R.C."/>
            <person name="Conaway J.W."/>
            <person name="Svejstrup J.Q."/>
        </authorList>
    </citation>
    <scope>FUNCTION</scope>
    <scope>CATALYTIC ACTIVITY</scope>
    <scope>INTERACTION WITH RSP5</scope>
    <scope>DISRUPTION PHENOTYPE</scope>
</reference>
<reference key="11">
    <citation type="journal article" date="2009" name="Science">
        <title>Global analysis of Cdk1 substrate phosphorylation sites provides insights into evolution.</title>
        <authorList>
            <person name="Holt L.J."/>
            <person name="Tuch B.B."/>
            <person name="Villen J."/>
            <person name="Johnson A.D."/>
            <person name="Gygi S.P."/>
            <person name="Morgan D.O."/>
        </authorList>
    </citation>
    <scope>PHOSPHORYLATION [LARGE SCALE ANALYSIS] AT SER-907</scope>
    <scope>IDENTIFICATION BY MASS SPECTROMETRY [LARGE SCALE ANALYSIS]</scope>
</reference>
<reference key="12">
    <citation type="journal article" date="2013" name="Mol. Cell">
        <title>Two deubiquitylases act on mitofusin and regulate mitochondrial fusion along independent pathways.</title>
        <authorList>
            <person name="Anton F."/>
            <person name="Dittmar G."/>
            <person name="Langer T."/>
            <person name="Escobar-Henriques M."/>
        </authorList>
    </citation>
    <scope>FUNCTION IN DEUBIQUITINATION OF FZO1</scope>
    <scope>INTERACTION WITH FZO1</scope>
</reference>
<dbReference type="EC" id="3.4.19.12" evidence="6"/>
<dbReference type="EMBL" id="M94916">
    <property type="protein sequence ID" value="AAA35190.1"/>
    <property type="molecule type" value="Genomic_DNA"/>
</dbReference>
<dbReference type="EMBL" id="X94335">
    <property type="protein sequence ID" value="CAA64043.1"/>
    <property type="molecule type" value="Genomic_DNA"/>
</dbReference>
<dbReference type="EMBL" id="X90518">
    <property type="protein sequence ID" value="CAA62120.1"/>
    <property type="molecule type" value="Genomic_DNA"/>
</dbReference>
<dbReference type="EMBL" id="Z75032">
    <property type="protein sequence ID" value="CAA99323.1"/>
    <property type="molecule type" value="Genomic_DNA"/>
</dbReference>
<dbReference type="EMBL" id="BK006948">
    <property type="protein sequence ID" value="DAA10898.1"/>
    <property type="molecule type" value="Genomic_DNA"/>
</dbReference>
<dbReference type="PIR" id="S60999">
    <property type="entry name" value="S60999"/>
</dbReference>
<dbReference type="RefSeq" id="NP_014767.3">
    <property type="nucleotide sequence ID" value="NM_001183543.3"/>
</dbReference>
<dbReference type="BioGRID" id="34519">
    <property type="interactions" value="174"/>
</dbReference>
<dbReference type="DIP" id="DIP-2647N"/>
<dbReference type="FunCoup" id="Q01476">
    <property type="interactions" value="116"/>
</dbReference>
<dbReference type="IntAct" id="Q01476">
    <property type="interactions" value="16"/>
</dbReference>
<dbReference type="MINT" id="Q01476"/>
<dbReference type="STRING" id="4932.YOR124C"/>
<dbReference type="MEROPS" id="C19.003"/>
<dbReference type="GlyGen" id="Q01476">
    <property type="glycosylation" value="1 site"/>
</dbReference>
<dbReference type="iPTMnet" id="Q01476"/>
<dbReference type="PaxDb" id="4932-YOR124C"/>
<dbReference type="PeptideAtlas" id="Q01476"/>
<dbReference type="EnsemblFungi" id="YOR124C_mRNA">
    <property type="protein sequence ID" value="YOR124C"/>
    <property type="gene ID" value="YOR124C"/>
</dbReference>
<dbReference type="GeneID" id="854291"/>
<dbReference type="KEGG" id="sce:YOR124C"/>
<dbReference type="AGR" id="SGD:S000005650"/>
<dbReference type="SGD" id="S000005650">
    <property type="gene designation" value="UBP2"/>
</dbReference>
<dbReference type="VEuPathDB" id="FungiDB:YOR124C"/>
<dbReference type="eggNOG" id="KOG1863">
    <property type="taxonomic scope" value="Eukaryota"/>
</dbReference>
<dbReference type="GeneTree" id="ENSGT00940000175922"/>
<dbReference type="HOGENOM" id="CLU_003155_1_0_1"/>
<dbReference type="InParanoid" id="Q01476"/>
<dbReference type="OMA" id="MDIGDAY"/>
<dbReference type="OrthoDB" id="2420415at2759"/>
<dbReference type="BioCyc" id="YEAST:G3O-33651-MONOMER"/>
<dbReference type="Reactome" id="R-SCE-5689880">
    <property type="pathway name" value="Ub-specific processing proteases"/>
</dbReference>
<dbReference type="BioGRID-ORCS" id="854291">
    <property type="hits" value="0 hits in 10 CRISPR screens"/>
</dbReference>
<dbReference type="PRO" id="PR:Q01476"/>
<dbReference type="Proteomes" id="UP000002311">
    <property type="component" value="Chromosome XV"/>
</dbReference>
<dbReference type="RNAct" id="Q01476">
    <property type="molecule type" value="protein"/>
</dbReference>
<dbReference type="GO" id="GO:0005737">
    <property type="term" value="C:cytoplasm"/>
    <property type="evidence" value="ECO:0000305"/>
    <property type="project" value="SGD"/>
</dbReference>
<dbReference type="GO" id="GO:0005829">
    <property type="term" value="C:cytosol"/>
    <property type="evidence" value="ECO:0000318"/>
    <property type="project" value="GO_Central"/>
</dbReference>
<dbReference type="GO" id="GO:0005634">
    <property type="term" value="C:nucleus"/>
    <property type="evidence" value="ECO:0000318"/>
    <property type="project" value="GO_Central"/>
</dbReference>
<dbReference type="GO" id="GO:0004843">
    <property type="term" value="F:cysteine-type deubiquitinase activity"/>
    <property type="evidence" value="ECO:0000314"/>
    <property type="project" value="SGD"/>
</dbReference>
<dbReference type="GO" id="GO:0061578">
    <property type="term" value="F:K63-linked deubiquitinase activity"/>
    <property type="evidence" value="ECO:0000314"/>
    <property type="project" value="UniProtKB"/>
</dbReference>
<dbReference type="GO" id="GO:0070301">
    <property type="term" value="P:cellular response to hydrogen peroxide"/>
    <property type="evidence" value="ECO:0000315"/>
    <property type="project" value="SGD"/>
</dbReference>
<dbReference type="GO" id="GO:0010636">
    <property type="term" value="P:positive regulation of mitochondrial fusion"/>
    <property type="evidence" value="ECO:0000315"/>
    <property type="project" value="SGD"/>
</dbReference>
<dbReference type="GO" id="GO:0043161">
    <property type="term" value="P:proteasome-mediated ubiquitin-dependent protein catabolic process"/>
    <property type="evidence" value="ECO:0007669"/>
    <property type="project" value="InterPro"/>
</dbReference>
<dbReference type="GO" id="GO:0016579">
    <property type="term" value="P:protein deubiquitination"/>
    <property type="evidence" value="ECO:0000314"/>
    <property type="project" value="SGD"/>
</dbReference>
<dbReference type="GO" id="GO:0031647">
    <property type="term" value="P:regulation of protein stability"/>
    <property type="evidence" value="ECO:0000318"/>
    <property type="project" value="GO_Central"/>
</dbReference>
<dbReference type="GO" id="GO:0010992">
    <property type="term" value="P:ubiquitin recycling"/>
    <property type="evidence" value="ECO:0000315"/>
    <property type="project" value="SGD"/>
</dbReference>
<dbReference type="GO" id="GO:0043162">
    <property type="term" value="P:ubiquitin-dependent protein catabolic process via the multivesicular body sorting pathway"/>
    <property type="evidence" value="ECO:0000315"/>
    <property type="project" value="SGD"/>
</dbReference>
<dbReference type="CDD" id="cd02666">
    <property type="entry name" value="Peptidase_C19J"/>
    <property type="match status" value="1"/>
</dbReference>
<dbReference type="FunFam" id="3.90.70.10:FF:000176">
    <property type="entry name" value="Ubiquitin-specific protease"/>
    <property type="match status" value="1"/>
</dbReference>
<dbReference type="Gene3D" id="3.90.70.10">
    <property type="entry name" value="Cysteine proteinases"/>
    <property type="match status" value="1"/>
</dbReference>
<dbReference type="InterPro" id="IPR038765">
    <property type="entry name" value="Papain-like_cys_pep_sf"/>
</dbReference>
<dbReference type="InterPro" id="IPR001394">
    <property type="entry name" value="Peptidase_C19_UCH"/>
</dbReference>
<dbReference type="InterPro" id="IPR044635">
    <property type="entry name" value="UBP14-like"/>
</dbReference>
<dbReference type="InterPro" id="IPR025305">
    <property type="entry name" value="UCH_repeat_domain"/>
</dbReference>
<dbReference type="InterPro" id="IPR018200">
    <property type="entry name" value="USP_CS"/>
</dbReference>
<dbReference type="InterPro" id="IPR028889">
    <property type="entry name" value="USP_dom"/>
</dbReference>
<dbReference type="PANTHER" id="PTHR43982">
    <property type="entry name" value="UBIQUITIN CARBOXYL-TERMINAL HYDROLASE"/>
    <property type="match status" value="1"/>
</dbReference>
<dbReference type="PANTHER" id="PTHR43982:SF6">
    <property type="entry name" value="UBIQUITIN CARBOXYL-TERMINAL HYDROLASE 2-RELATED"/>
    <property type="match status" value="1"/>
</dbReference>
<dbReference type="Pfam" id="PF13446">
    <property type="entry name" value="RPT"/>
    <property type="match status" value="3"/>
</dbReference>
<dbReference type="Pfam" id="PF00443">
    <property type="entry name" value="UCH"/>
    <property type="match status" value="1"/>
</dbReference>
<dbReference type="SUPFAM" id="SSF54001">
    <property type="entry name" value="Cysteine proteinases"/>
    <property type="match status" value="1"/>
</dbReference>
<dbReference type="PROSITE" id="PS00972">
    <property type="entry name" value="USP_1"/>
    <property type="match status" value="1"/>
</dbReference>
<dbReference type="PROSITE" id="PS00973">
    <property type="entry name" value="USP_2"/>
    <property type="match status" value="1"/>
</dbReference>
<dbReference type="PROSITE" id="PS50235">
    <property type="entry name" value="USP_3"/>
    <property type="match status" value="1"/>
</dbReference>
<protein>
    <recommendedName>
        <fullName>Ubiquitin carboxyl-terminal hydrolase 2</fullName>
        <ecNumber evidence="6">3.4.19.12</ecNumber>
    </recommendedName>
    <alternativeName>
        <fullName>Deubiquitinating enzyme 2</fullName>
    </alternativeName>
    <alternativeName>
        <fullName>Ubiquitin thioesterase 2</fullName>
    </alternativeName>
    <alternativeName>
        <fullName>Ubiquitin-specific-processing protease 2</fullName>
    </alternativeName>
</protein>
<feature type="chain" id="PRO_0000080586" description="Ubiquitin carboxyl-terminal hydrolase 2">
    <location>
        <begin position="1"/>
        <end position="1272"/>
    </location>
</feature>
<feature type="domain" description="USP">
    <location>
        <begin position="736"/>
        <end position="1258"/>
    </location>
</feature>
<feature type="region of interest" description="Disordered" evidence="3">
    <location>
        <begin position="884"/>
        <end position="918"/>
    </location>
</feature>
<feature type="compositionally biased region" description="Acidic residues" evidence="3">
    <location>
        <begin position="902"/>
        <end position="911"/>
    </location>
</feature>
<feature type="active site" description="Nucleophile" evidence="1 2">
    <location>
        <position position="745"/>
    </location>
</feature>
<feature type="active site" description="Proton acceptor" evidence="1 2">
    <location>
        <position position="1209"/>
    </location>
</feature>
<feature type="modified residue" description="Phosphoserine" evidence="9 10 11">
    <location>
        <position position="907"/>
    </location>
</feature>
<feature type="sequence conflict" description="In Ref. 1." evidence="8" ref="1">
    <location>
        <begin position="658"/>
        <end position="665"/>
    </location>
</feature>
<name>UBP2_YEAST</name>
<proteinExistence type="evidence at protein level"/>
<accession>Q01476</accession>
<accession>D6W2I2</accession>
<accession>Q99357</accession>